<proteinExistence type="inferred from homology"/>
<reference key="1">
    <citation type="submission" date="2008-06" db="EMBL/GenBank/DDBJ databases">
        <title>Complete sequence of chromosome of Prosthecochloris aestuarii DSM 271.</title>
        <authorList>
            <consortium name="US DOE Joint Genome Institute"/>
            <person name="Lucas S."/>
            <person name="Copeland A."/>
            <person name="Lapidus A."/>
            <person name="Glavina del Rio T."/>
            <person name="Dalin E."/>
            <person name="Tice H."/>
            <person name="Bruce D."/>
            <person name="Goodwin L."/>
            <person name="Pitluck S."/>
            <person name="Schmutz J."/>
            <person name="Larimer F."/>
            <person name="Land M."/>
            <person name="Hauser L."/>
            <person name="Kyrpides N."/>
            <person name="Anderson I."/>
            <person name="Liu Z."/>
            <person name="Li T."/>
            <person name="Zhao F."/>
            <person name="Overmann J."/>
            <person name="Bryant D.A."/>
            <person name="Richardson P."/>
        </authorList>
    </citation>
    <scope>NUCLEOTIDE SEQUENCE [LARGE SCALE GENOMIC DNA]</scope>
    <source>
        <strain>DSM 271 / SK 413</strain>
    </source>
</reference>
<evidence type="ECO:0000255" key="1">
    <source>
        <dbReference type="HAMAP-Rule" id="MF_00079"/>
    </source>
</evidence>
<accession>B4S561</accession>
<dbReference type="EC" id="2.4.2.17" evidence="1"/>
<dbReference type="EMBL" id="CP001108">
    <property type="protein sequence ID" value="ACF47007.1"/>
    <property type="molecule type" value="Genomic_DNA"/>
</dbReference>
<dbReference type="RefSeq" id="WP_012506540.1">
    <property type="nucleotide sequence ID" value="NC_011059.1"/>
</dbReference>
<dbReference type="SMR" id="B4S561"/>
<dbReference type="STRING" id="290512.Paes_1995"/>
<dbReference type="KEGG" id="paa:Paes_1995"/>
<dbReference type="eggNOG" id="COG0040">
    <property type="taxonomic scope" value="Bacteria"/>
</dbReference>
<dbReference type="HOGENOM" id="CLU_038115_1_1_10"/>
<dbReference type="UniPathway" id="UPA00031">
    <property type="reaction ID" value="UER00006"/>
</dbReference>
<dbReference type="Proteomes" id="UP000002725">
    <property type="component" value="Chromosome"/>
</dbReference>
<dbReference type="GO" id="GO:0005737">
    <property type="term" value="C:cytoplasm"/>
    <property type="evidence" value="ECO:0007669"/>
    <property type="project" value="UniProtKB-SubCell"/>
</dbReference>
<dbReference type="GO" id="GO:0005524">
    <property type="term" value="F:ATP binding"/>
    <property type="evidence" value="ECO:0007669"/>
    <property type="project" value="UniProtKB-KW"/>
</dbReference>
<dbReference type="GO" id="GO:0003879">
    <property type="term" value="F:ATP phosphoribosyltransferase activity"/>
    <property type="evidence" value="ECO:0007669"/>
    <property type="project" value="UniProtKB-UniRule"/>
</dbReference>
<dbReference type="GO" id="GO:0000287">
    <property type="term" value="F:magnesium ion binding"/>
    <property type="evidence" value="ECO:0007669"/>
    <property type="project" value="UniProtKB-UniRule"/>
</dbReference>
<dbReference type="GO" id="GO:0000105">
    <property type="term" value="P:L-histidine biosynthetic process"/>
    <property type="evidence" value="ECO:0007669"/>
    <property type="project" value="UniProtKB-UniRule"/>
</dbReference>
<dbReference type="CDD" id="cd13593">
    <property type="entry name" value="PBP2_HisGL3"/>
    <property type="match status" value="1"/>
</dbReference>
<dbReference type="FunFam" id="3.30.70.120:FF:000002">
    <property type="entry name" value="ATP phosphoribosyltransferase"/>
    <property type="match status" value="1"/>
</dbReference>
<dbReference type="FunFam" id="3.40.190.10:FF:000258">
    <property type="entry name" value="ATP phosphoribosyltransferase"/>
    <property type="match status" value="1"/>
</dbReference>
<dbReference type="Gene3D" id="3.30.70.120">
    <property type="match status" value="1"/>
</dbReference>
<dbReference type="Gene3D" id="3.40.190.10">
    <property type="entry name" value="Periplasmic binding protein-like II"/>
    <property type="match status" value="2"/>
</dbReference>
<dbReference type="HAMAP" id="MF_00079">
    <property type="entry name" value="HisG_Long"/>
    <property type="match status" value="1"/>
</dbReference>
<dbReference type="InterPro" id="IPR020621">
    <property type="entry name" value="ATP-PRT_HisG_long"/>
</dbReference>
<dbReference type="InterPro" id="IPR013820">
    <property type="entry name" value="ATP_PRibTrfase_cat"/>
</dbReference>
<dbReference type="InterPro" id="IPR001348">
    <property type="entry name" value="ATP_PRibTrfase_HisG"/>
</dbReference>
<dbReference type="InterPro" id="IPR013115">
    <property type="entry name" value="HisG_C"/>
</dbReference>
<dbReference type="InterPro" id="IPR011322">
    <property type="entry name" value="N-reg_PII-like_a/b"/>
</dbReference>
<dbReference type="InterPro" id="IPR015867">
    <property type="entry name" value="N-reg_PII/ATP_PRibTrfase_C"/>
</dbReference>
<dbReference type="NCBIfam" id="TIGR00070">
    <property type="entry name" value="hisG"/>
    <property type="match status" value="1"/>
</dbReference>
<dbReference type="NCBIfam" id="TIGR03455">
    <property type="entry name" value="HisG_C-term"/>
    <property type="match status" value="1"/>
</dbReference>
<dbReference type="PANTHER" id="PTHR21403:SF10">
    <property type="entry name" value="ATP PHOSPHORIBOSYLTRANSFERASE"/>
    <property type="match status" value="1"/>
</dbReference>
<dbReference type="PANTHER" id="PTHR21403">
    <property type="entry name" value="ATP PHOSPHORIBOSYLTRANSFERASE ATP-PRTASE"/>
    <property type="match status" value="1"/>
</dbReference>
<dbReference type="Pfam" id="PF01634">
    <property type="entry name" value="HisG"/>
    <property type="match status" value="1"/>
</dbReference>
<dbReference type="Pfam" id="PF08029">
    <property type="entry name" value="HisG_C"/>
    <property type="match status" value="1"/>
</dbReference>
<dbReference type="SUPFAM" id="SSF54913">
    <property type="entry name" value="GlnB-like"/>
    <property type="match status" value="1"/>
</dbReference>
<dbReference type="SUPFAM" id="SSF53850">
    <property type="entry name" value="Periplasmic binding protein-like II"/>
    <property type="match status" value="1"/>
</dbReference>
<gene>
    <name evidence="1" type="primary">hisG</name>
    <name type="ordered locus">Paes_1995</name>
</gene>
<name>HIS1_PROA2</name>
<organism>
    <name type="scientific">Prosthecochloris aestuarii (strain DSM 271 / SK 413)</name>
    <dbReference type="NCBI Taxonomy" id="290512"/>
    <lineage>
        <taxon>Bacteria</taxon>
        <taxon>Pseudomonadati</taxon>
        <taxon>Chlorobiota</taxon>
        <taxon>Chlorobiia</taxon>
        <taxon>Chlorobiales</taxon>
        <taxon>Chlorobiaceae</taxon>
        <taxon>Prosthecochloris</taxon>
    </lineage>
</organism>
<feature type="chain" id="PRO_1000092741" description="ATP phosphoribosyltransferase">
    <location>
        <begin position="1"/>
        <end position="294"/>
    </location>
</feature>
<keyword id="KW-0028">Amino-acid biosynthesis</keyword>
<keyword id="KW-0067">ATP-binding</keyword>
<keyword id="KW-0963">Cytoplasm</keyword>
<keyword id="KW-0328">Glycosyltransferase</keyword>
<keyword id="KW-0368">Histidine biosynthesis</keyword>
<keyword id="KW-0460">Magnesium</keyword>
<keyword id="KW-0479">Metal-binding</keyword>
<keyword id="KW-0547">Nucleotide-binding</keyword>
<keyword id="KW-0808">Transferase</keyword>
<protein>
    <recommendedName>
        <fullName evidence="1">ATP phosphoribosyltransferase</fullName>
        <shortName evidence="1">ATP-PRT</shortName>
        <shortName evidence="1">ATP-PRTase</shortName>
        <ecNumber evidence="1">2.4.2.17</ecNumber>
    </recommendedName>
</protein>
<comment type="function">
    <text evidence="1">Catalyzes the condensation of ATP and 5-phosphoribose 1-diphosphate to form N'-(5'-phosphoribosyl)-ATP (PR-ATP). Has a crucial role in the pathway because the rate of histidine biosynthesis seems to be controlled primarily by regulation of HisG enzymatic activity.</text>
</comment>
<comment type="catalytic activity">
    <reaction evidence="1">
        <text>1-(5-phospho-beta-D-ribosyl)-ATP + diphosphate = 5-phospho-alpha-D-ribose 1-diphosphate + ATP</text>
        <dbReference type="Rhea" id="RHEA:18473"/>
        <dbReference type="ChEBI" id="CHEBI:30616"/>
        <dbReference type="ChEBI" id="CHEBI:33019"/>
        <dbReference type="ChEBI" id="CHEBI:58017"/>
        <dbReference type="ChEBI" id="CHEBI:73183"/>
        <dbReference type="EC" id="2.4.2.17"/>
    </reaction>
</comment>
<comment type="cofactor">
    <cofactor evidence="1">
        <name>Mg(2+)</name>
        <dbReference type="ChEBI" id="CHEBI:18420"/>
    </cofactor>
</comment>
<comment type="activity regulation">
    <text evidence="1">Feedback inhibited by histidine.</text>
</comment>
<comment type="pathway">
    <text evidence="1">Amino-acid biosynthesis; L-histidine biosynthesis; L-histidine from 5-phospho-alpha-D-ribose 1-diphosphate: step 1/9.</text>
</comment>
<comment type="subcellular location">
    <subcellularLocation>
        <location evidence="1">Cytoplasm</location>
    </subcellularLocation>
</comment>
<comment type="similarity">
    <text evidence="1">Belongs to the ATP phosphoribosyltransferase family. Long subfamily.</text>
</comment>
<sequence>MSASKQLLKLGLPKGSLQDSTLDLFAKAGFHFSVKSRSYFPSIDDDELEAILIRAQEMAHYVELGAFDVGLTGKDWIIETDADVVEVSDLVYSKASMRPVRWVLAVPESSSIQTVKDLEGKHIATEVVNITKKYLAENNVNAHVEFSWGATEVKPPELADAIVEVTETGSSLRANKLRIVEVLLESNTKLIANRNSWNDPWKREKIENMAMLLQGAIHAQGKVGLKMNAPKDALDKIMAFIPGLRTPTVSNLADDKWVALEVIVDEQTVRSVIPDLKRAGAEGIFEYHINKLID</sequence>